<comment type="function">
    <text evidence="1">Involved in mRNA processing.</text>
</comment>
<comment type="subcellular location">
    <subcellularLocation>
        <location evidence="1">Nucleus</location>
    </subcellularLocation>
</comment>
<comment type="similarity">
    <text evidence="4">Belongs to the FIP1 family.</text>
</comment>
<name>FIP1_DANRE</name>
<evidence type="ECO:0000250" key="1"/>
<evidence type="ECO:0000256" key="2">
    <source>
        <dbReference type="SAM" id="MobiDB-lite"/>
    </source>
</evidence>
<evidence type="ECO:0000269" key="3">
    <source>
    </source>
</evidence>
<evidence type="ECO:0000305" key="4"/>
<organism>
    <name type="scientific">Danio rerio</name>
    <name type="common">Zebrafish</name>
    <name type="synonym">Brachydanio rerio</name>
    <dbReference type="NCBI Taxonomy" id="7955"/>
    <lineage>
        <taxon>Eukaryota</taxon>
        <taxon>Metazoa</taxon>
        <taxon>Chordata</taxon>
        <taxon>Craniata</taxon>
        <taxon>Vertebrata</taxon>
        <taxon>Euteleostomi</taxon>
        <taxon>Actinopterygii</taxon>
        <taxon>Neopterygii</taxon>
        <taxon>Teleostei</taxon>
        <taxon>Ostariophysi</taxon>
        <taxon>Cypriniformes</taxon>
        <taxon>Danionidae</taxon>
        <taxon>Danioninae</taxon>
        <taxon>Danio</taxon>
    </lineage>
</organism>
<protein>
    <recommendedName>
        <fullName>Pre-mRNA 3'-end-processing factor FIP1</fullName>
    </recommendedName>
    <alternativeName>
        <fullName>FIP1-like 1 protein</fullName>
    </alternativeName>
</protein>
<reference key="1">
    <citation type="submission" date="2004-10" db="EMBL/GenBank/DDBJ databases">
        <authorList>
            <consortium name="NIH - Zebrafish Gene Collection (ZGC) project"/>
        </authorList>
    </citation>
    <scope>NUCLEOTIDE SEQUENCE [LARGE SCALE MRNA]</scope>
    <source>
        <tissue>Heart</tissue>
    </source>
</reference>
<reference key="2">
    <citation type="journal article" date="2008" name="J. Proteome Res.">
        <title>Online automated in vivo zebrafish phosphoproteomics: from large-scale analysis down to a single embryo.</title>
        <authorList>
            <person name="Lemeer S."/>
            <person name="Pinkse M.W.H."/>
            <person name="Mohammed S."/>
            <person name="van Breukelen B."/>
            <person name="den Hertog J."/>
            <person name="Slijper M."/>
            <person name="Heck A.J.R."/>
        </authorList>
    </citation>
    <scope>PHOSPHORYLATION [LARGE SCALE ANALYSIS] AT THR-125 AND SER-247</scope>
    <scope>IDENTIFICATION BY MASS SPECTROMETRY</scope>
    <source>
        <tissue>Embryo</tissue>
    </source>
</reference>
<keyword id="KW-0507">mRNA processing</keyword>
<keyword id="KW-0539">Nucleus</keyword>
<keyword id="KW-0597">Phosphoprotein</keyword>
<keyword id="KW-1185">Reference proteome</keyword>
<sequence length="570" mass="62966">MSAEEADKTTTTDASAGDEEEEWLYGDEGESKETEEEEAKLTAAISATSTTPVAEDAPTTTNNSSDSATPPTTTTTTGNGVASQEEAPGEDEDSESDSDDDDDDVRVTIGDIKTGAPQYTGYGGTPVNLNIKSAGSRAYGAGAKVKGVDLEAPGSINGVPVLEADMESFEEKPWRKPGADLSDYFNYGFNEDTWKAYCEKQKRLRMGLDVLNIGSTTSKISVQQGRTGNNEKEITIPAHASKAEFTSPSNLYKAGLNQGRISPPHWAGPPSQDLSYYTKTPGTIDVIGGQTATISRVEGRRRHNLEGNNIQVISEHSSSEVEPEVQKMPPPFFPPGPLPPNIPPPPFLPPPVSQAPPLIPPHRMPITVPPPNFPPPTGGPPPSLIPTLDNSGHPGGYDGRPVAPYPFPTGGFPPPMQGAVNPWPGLMENPKQWDYYPRRDKEREKERERERQRDRGHERDHSPNAGPYNSMAMCSDEERYRSYRDYGDRGYERHRERASREKEERHGGRRHREKEEGRHKSSRSSSRRRHESEEGDSHRRHKHKKSKRSKEGKEPSEERSADQENQEAME</sequence>
<gene>
    <name type="primary">fip1l1</name>
    <name type="ORF">zgc:103421</name>
</gene>
<dbReference type="EMBL" id="BC083370">
    <property type="protein sequence ID" value="AAH83370.1"/>
    <property type="molecule type" value="mRNA"/>
</dbReference>
<dbReference type="RefSeq" id="NP_001006042.1">
    <property type="nucleotide sequence ID" value="NM_001006042.1"/>
</dbReference>
<dbReference type="SMR" id="Q5XJD3"/>
<dbReference type="FunCoup" id="Q5XJD3">
    <property type="interactions" value="1781"/>
</dbReference>
<dbReference type="STRING" id="7955.ENSDARP00000094123"/>
<dbReference type="iPTMnet" id="Q5XJD3"/>
<dbReference type="PaxDb" id="7955-ENSDARP00000094123"/>
<dbReference type="GeneID" id="450021"/>
<dbReference type="KEGG" id="dre:450021"/>
<dbReference type="AGR" id="ZFIN:ZDB-GENE-041010-138"/>
<dbReference type="CTD" id="450021"/>
<dbReference type="ZFIN" id="ZDB-GENE-041010-138">
    <property type="gene designation" value="fip1l1b"/>
</dbReference>
<dbReference type="eggNOG" id="KOG1049">
    <property type="taxonomic scope" value="Eukaryota"/>
</dbReference>
<dbReference type="InParanoid" id="Q5XJD3"/>
<dbReference type="OrthoDB" id="1917198at2759"/>
<dbReference type="PhylomeDB" id="Q5XJD3"/>
<dbReference type="PRO" id="PR:Q5XJD3"/>
<dbReference type="Proteomes" id="UP000000437">
    <property type="component" value="Chromosome 1"/>
</dbReference>
<dbReference type="GO" id="GO:0005847">
    <property type="term" value="C:mRNA cleavage and polyadenylation specificity factor complex"/>
    <property type="evidence" value="ECO:0000318"/>
    <property type="project" value="GO_Central"/>
</dbReference>
<dbReference type="GO" id="GO:0006397">
    <property type="term" value="P:mRNA processing"/>
    <property type="evidence" value="ECO:0007669"/>
    <property type="project" value="UniProtKB-KW"/>
</dbReference>
<dbReference type="InterPro" id="IPR007854">
    <property type="entry name" value="Fip1_dom"/>
</dbReference>
<dbReference type="InterPro" id="IPR051187">
    <property type="entry name" value="Pre-mRNA_3'-end_processing_reg"/>
</dbReference>
<dbReference type="PANTHER" id="PTHR13484">
    <property type="entry name" value="FIP1-LIKE 1 PROTEIN"/>
    <property type="match status" value="1"/>
</dbReference>
<dbReference type="PANTHER" id="PTHR13484:SF9">
    <property type="entry name" value="PRE-MRNA 3'-END-PROCESSING FACTOR FIP1"/>
    <property type="match status" value="1"/>
</dbReference>
<dbReference type="Pfam" id="PF05182">
    <property type="entry name" value="Fip1"/>
    <property type="match status" value="1"/>
</dbReference>
<proteinExistence type="evidence at protein level"/>
<feature type="chain" id="PRO_0000215041" description="Pre-mRNA 3'-end-processing factor FIP1">
    <location>
        <begin position="1"/>
        <end position="570"/>
    </location>
</feature>
<feature type="region of interest" description="Disordered" evidence="2">
    <location>
        <begin position="1"/>
        <end position="107"/>
    </location>
</feature>
<feature type="region of interest" description="Disordered" evidence="2">
    <location>
        <begin position="300"/>
        <end position="328"/>
    </location>
</feature>
<feature type="region of interest" description="Disordered" evidence="2">
    <location>
        <begin position="371"/>
        <end position="400"/>
    </location>
</feature>
<feature type="region of interest" description="Disordered" evidence="2">
    <location>
        <begin position="418"/>
        <end position="570"/>
    </location>
</feature>
<feature type="compositionally biased region" description="Basic and acidic residues" evidence="2">
    <location>
        <begin position="1"/>
        <end position="10"/>
    </location>
</feature>
<feature type="compositionally biased region" description="Acidic residues" evidence="2">
    <location>
        <begin position="16"/>
        <end position="38"/>
    </location>
</feature>
<feature type="compositionally biased region" description="Low complexity" evidence="2">
    <location>
        <begin position="56"/>
        <end position="77"/>
    </location>
</feature>
<feature type="compositionally biased region" description="Acidic residues" evidence="2">
    <location>
        <begin position="87"/>
        <end position="104"/>
    </location>
</feature>
<feature type="compositionally biased region" description="Pro residues" evidence="2">
    <location>
        <begin position="371"/>
        <end position="384"/>
    </location>
</feature>
<feature type="compositionally biased region" description="Basic and acidic residues" evidence="2">
    <location>
        <begin position="436"/>
        <end position="462"/>
    </location>
</feature>
<feature type="compositionally biased region" description="Basic and acidic residues" evidence="2">
    <location>
        <begin position="476"/>
        <end position="506"/>
    </location>
</feature>
<feature type="compositionally biased region" description="Basic residues" evidence="2">
    <location>
        <begin position="520"/>
        <end position="529"/>
    </location>
</feature>
<feature type="compositionally biased region" description="Basic residues" evidence="2">
    <location>
        <begin position="538"/>
        <end position="548"/>
    </location>
</feature>
<feature type="compositionally biased region" description="Basic and acidic residues" evidence="2">
    <location>
        <begin position="549"/>
        <end position="562"/>
    </location>
</feature>
<feature type="modified residue" description="Phosphothreonine" evidence="3">
    <location>
        <position position="125"/>
    </location>
</feature>
<feature type="modified residue" description="Phosphoserine" evidence="3">
    <location>
        <position position="247"/>
    </location>
</feature>
<accession>Q5XJD3</accession>